<name>RNFB_VIBVY</name>
<gene>
    <name evidence="1" type="primary">rnfB</name>
    <name type="ordered locus">VV1191</name>
</gene>
<sequence length="198" mass="21023">MTTIMIAVLAIALLATLFGAILGFASIRFKVEADPIVDQIDAILPQTQCGQCGYPGCRPYAEAIANGDSINKCPPGGQATIEKLADLMGVEAEESAHDLEGKVKKVAFIHEDMCIGCTKCIQACPVDAIVGGTKALHTVIKDECTGCDLCVAPCPTDCIEMIPLETTTETWKWQLNAIPVVNISEANPNSATSRDQNN</sequence>
<dbReference type="EC" id="7.-.-.-" evidence="1"/>
<dbReference type="EMBL" id="BA000037">
    <property type="protein sequence ID" value="BAC93955.1"/>
    <property type="molecule type" value="Genomic_DNA"/>
</dbReference>
<dbReference type="SMR" id="Q7MM82"/>
<dbReference type="STRING" id="672.VV93_v1c11110"/>
<dbReference type="KEGG" id="vvy:VV1191"/>
<dbReference type="eggNOG" id="COG2878">
    <property type="taxonomic scope" value="Bacteria"/>
</dbReference>
<dbReference type="HOGENOM" id="CLU_063448_2_0_6"/>
<dbReference type="Proteomes" id="UP000002675">
    <property type="component" value="Chromosome I"/>
</dbReference>
<dbReference type="GO" id="GO:0005886">
    <property type="term" value="C:plasma membrane"/>
    <property type="evidence" value="ECO:0007669"/>
    <property type="project" value="UniProtKB-SubCell"/>
</dbReference>
<dbReference type="GO" id="GO:0051539">
    <property type="term" value="F:4 iron, 4 sulfur cluster binding"/>
    <property type="evidence" value="ECO:0007669"/>
    <property type="project" value="UniProtKB-UniRule"/>
</dbReference>
<dbReference type="GO" id="GO:0009055">
    <property type="term" value="F:electron transfer activity"/>
    <property type="evidence" value="ECO:0007669"/>
    <property type="project" value="InterPro"/>
</dbReference>
<dbReference type="GO" id="GO:0046872">
    <property type="term" value="F:metal ion binding"/>
    <property type="evidence" value="ECO:0007669"/>
    <property type="project" value="UniProtKB-KW"/>
</dbReference>
<dbReference type="GO" id="GO:0022900">
    <property type="term" value="P:electron transport chain"/>
    <property type="evidence" value="ECO:0007669"/>
    <property type="project" value="UniProtKB-UniRule"/>
</dbReference>
<dbReference type="FunFam" id="1.10.15.40:FF:000001">
    <property type="entry name" value="Ion-translocating oxidoreductase complex subunit B"/>
    <property type="match status" value="1"/>
</dbReference>
<dbReference type="Gene3D" id="3.30.70.20">
    <property type="match status" value="2"/>
</dbReference>
<dbReference type="Gene3D" id="1.10.15.40">
    <property type="entry name" value="Electron transport complex subunit B, putative Fe-S cluster"/>
    <property type="match status" value="1"/>
</dbReference>
<dbReference type="HAMAP" id="MF_00463">
    <property type="entry name" value="RsxB_RnfB"/>
    <property type="match status" value="1"/>
</dbReference>
<dbReference type="InterPro" id="IPR007202">
    <property type="entry name" value="4Fe-4S_dom"/>
</dbReference>
<dbReference type="InterPro" id="IPR017896">
    <property type="entry name" value="4Fe4S_Fe-S-bd"/>
</dbReference>
<dbReference type="InterPro" id="IPR017900">
    <property type="entry name" value="4Fe4S_Fe_S_CS"/>
</dbReference>
<dbReference type="InterPro" id="IPR010207">
    <property type="entry name" value="Elect_transpt_cplx_RnfB/RsxB"/>
</dbReference>
<dbReference type="InterPro" id="IPR016463">
    <property type="entry name" value="RnfB/RsxB_Proteobac"/>
</dbReference>
<dbReference type="InterPro" id="IPR050294">
    <property type="entry name" value="RnfB_subfamily"/>
</dbReference>
<dbReference type="NCBIfam" id="NF003475">
    <property type="entry name" value="PRK05113.1"/>
    <property type="match status" value="1"/>
</dbReference>
<dbReference type="NCBIfam" id="TIGR01944">
    <property type="entry name" value="rnfB"/>
    <property type="match status" value="1"/>
</dbReference>
<dbReference type="PANTHER" id="PTHR42859:SF3">
    <property type="entry name" value="ION-TRANSLOCATING OXIDOREDUCTASE COMPLEX SUBUNIT B"/>
    <property type="match status" value="1"/>
</dbReference>
<dbReference type="PANTHER" id="PTHR42859">
    <property type="entry name" value="OXIDOREDUCTASE"/>
    <property type="match status" value="1"/>
</dbReference>
<dbReference type="Pfam" id="PF14697">
    <property type="entry name" value="Fer4_21"/>
    <property type="match status" value="1"/>
</dbReference>
<dbReference type="Pfam" id="PF04060">
    <property type="entry name" value="FeS"/>
    <property type="match status" value="1"/>
</dbReference>
<dbReference type="PIRSF" id="PIRSF005784">
    <property type="entry name" value="Elect_transpt_RnfB"/>
    <property type="match status" value="1"/>
</dbReference>
<dbReference type="SUPFAM" id="SSF54862">
    <property type="entry name" value="4Fe-4S ferredoxins"/>
    <property type="match status" value="1"/>
</dbReference>
<dbReference type="PROSITE" id="PS51656">
    <property type="entry name" value="4FE4S"/>
    <property type="match status" value="1"/>
</dbReference>
<dbReference type="PROSITE" id="PS00198">
    <property type="entry name" value="4FE4S_FER_1"/>
    <property type="match status" value="2"/>
</dbReference>
<dbReference type="PROSITE" id="PS51379">
    <property type="entry name" value="4FE4S_FER_2"/>
    <property type="match status" value="2"/>
</dbReference>
<reference key="1">
    <citation type="journal article" date="2003" name="Genome Res.">
        <title>Comparative genome analysis of Vibrio vulnificus, a marine pathogen.</title>
        <authorList>
            <person name="Chen C.-Y."/>
            <person name="Wu K.-M."/>
            <person name="Chang Y.-C."/>
            <person name="Chang C.-H."/>
            <person name="Tsai H.-C."/>
            <person name="Liao T.-L."/>
            <person name="Liu Y.-M."/>
            <person name="Chen H.-J."/>
            <person name="Shen A.B.-T."/>
            <person name="Li J.-C."/>
            <person name="Su T.-L."/>
            <person name="Shao C.-P."/>
            <person name="Lee C.-T."/>
            <person name="Hor L.-I."/>
            <person name="Tsai S.-F."/>
        </authorList>
    </citation>
    <scope>NUCLEOTIDE SEQUENCE [LARGE SCALE GENOMIC DNA]</scope>
    <source>
        <strain>YJ016</strain>
    </source>
</reference>
<accession>Q7MM82</accession>
<evidence type="ECO:0000255" key="1">
    <source>
        <dbReference type="HAMAP-Rule" id="MF_00463"/>
    </source>
</evidence>
<protein>
    <recommendedName>
        <fullName evidence="1">Ion-translocating oxidoreductase complex subunit B</fullName>
        <ecNumber evidence="1">7.-.-.-</ecNumber>
    </recommendedName>
    <alternativeName>
        <fullName evidence="1">Rnf electron transport complex subunit B</fullName>
    </alternativeName>
</protein>
<organism>
    <name type="scientific">Vibrio vulnificus (strain YJ016)</name>
    <dbReference type="NCBI Taxonomy" id="196600"/>
    <lineage>
        <taxon>Bacteria</taxon>
        <taxon>Pseudomonadati</taxon>
        <taxon>Pseudomonadota</taxon>
        <taxon>Gammaproteobacteria</taxon>
        <taxon>Vibrionales</taxon>
        <taxon>Vibrionaceae</taxon>
        <taxon>Vibrio</taxon>
    </lineage>
</organism>
<keyword id="KW-0004">4Fe-4S</keyword>
<keyword id="KW-0997">Cell inner membrane</keyword>
<keyword id="KW-1003">Cell membrane</keyword>
<keyword id="KW-0249">Electron transport</keyword>
<keyword id="KW-0408">Iron</keyword>
<keyword id="KW-0411">Iron-sulfur</keyword>
<keyword id="KW-0472">Membrane</keyword>
<keyword id="KW-0479">Metal-binding</keyword>
<keyword id="KW-0677">Repeat</keyword>
<keyword id="KW-1278">Translocase</keyword>
<keyword id="KW-0813">Transport</keyword>
<feature type="chain" id="PRO_0000216283" description="Ion-translocating oxidoreductase complex subunit B">
    <location>
        <begin position="1"/>
        <end position="198"/>
    </location>
</feature>
<feature type="domain" description="4Fe-4S" evidence="1">
    <location>
        <begin position="32"/>
        <end position="90"/>
    </location>
</feature>
<feature type="domain" description="4Fe-4S ferredoxin-type 1" evidence="1">
    <location>
        <begin position="105"/>
        <end position="134"/>
    </location>
</feature>
<feature type="domain" description="4Fe-4S ferredoxin-type 2" evidence="1">
    <location>
        <begin position="135"/>
        <end position="164"/>
    </location>
</feature>
<feature type="region of interest" description="Hydrophobic" evidence="1">
    <location>
        <begin position="1"/>
        <end position="26"/>
    </location>
</feature>
<feature type="binding site" evidence="1">
    <location>
        <position position="49"/>
    </location>
    <ligand>
        <name>[4Fe-4S] cluster</name>
        <dbReference type="ChEBI" id="CHEBI:49883"/>
        <label>1</label>
    </ligand>
</feature>
<feature type="binding site" evidence="1">
    <location>
        <position position="52"/>
    </location>
    <ligand>
        <name>[4Fe-4S] cluster</name>
        <dbReference type="ChEBI" id="CHEBI:49883"/>
        <label>1</label>
    </ligand>
</feature>
<feature type="binding site" evidence="1">
    <location>
        <position position="57"/>
    </location>
    <ligand>
        <name>[4Fe-4S] cluster</name>
        <dbReference type="ChEBI" id="CHEBI:49883"/>
        <label>1</label>
    </ligand>
</feature>
<feature type="binding site" evidence="1">
    <location>
        <position position="73"/>
    </location>
    <ligand>
        <name>[4Fe-4S] cluster</name>
        <dbReference type="ChEBI" id="CHEBI:49883"/>
        <label>1</label>
    </ligand>
</feature>
<feature type="binding site" evidence="1">
    <location>
        <position position="114"/>
    </location>
    <ligand>
        <name>[4Fe-4S] cluster</name>
        <dbReference type="ChEBI" id="CHEBI:49883"/>
        <label>2</label>
    </ligand>
</feature>
<feature type="binding site" evidence="1">
    <location>
        <position position="117"/>
    </location>
    <ligand>
        <name>[4Fe-4S] cluster</name>
        <dbReference type="ChEBI" id="CHEBI:49883"/>
        <label>2</label>
    </ligand>
</feature>
<feature type="binding site" evidence="1">
    <location>
        <position position="120"/>
    </location>
    <ligand>
        <name>[4Fe-4S] cluster</name>
        <dbReference type="ChEBI" id="CHEBI:49883"/>
        <label>2</label>
    </ligand>
</feature>
<feature type="binding site" evidence="1">
    <location>
        <position position="124"/>
    </location>
    <ligand>
        <name>[4Fe-4S] cluster</name>
        <dbReference type="ChEBI" id="CHEBI:49883"/>
        <label>3</label>
    </ligand>
</feature>
<feature type="binding site" evidence="1">
    <location>
        <position position="144"/>
    </location>
    <ligand>
        <name>[4Fe-4S] cluster</name>
        <dbReference type="ChEBI" id="CHEBI:49883"/>
        <label>3</label>
    </ligand>
</feature>
<feature type="binding site" evidence="1">
    <location>
        <position position="147"/>
    </location>
    <ligand>
        <name>[4Fe-4S] cluster</name>
        <dbReference type="ChEBI" id="CHEBI:49883"/>
        <label>3</label>
    </ligand>
</feature>
<feature type="binding site" evidence="1">
    <location>
        <position position="150"/>
    </location>
    <ligand>
        <name>[4Fe-4S] cluster</name>
        <dbReference type="ChEBI" id="CHEBI:49883"/>
        <label>3</label>
    </ligand>
</feature>
<feature type="binding site" evidence="1">
    <location>
        <position position="154"/>
    </location>
    <ligand>
        <name>[4Fe-4S] cluster</name>
        <dbReference type="ChEBI" id="CHEBI:49883"/>
        <label>2</label>
    </ligand>
</feature>
<comment type="function">
    <text evidence="1">Part of a membrane-bound complex that couples electron transfer with translocation of ions across the membrane.</text>
</comment>
<comment type="cofactor">
    <cofactor evidence="1">
        <name>[4Fe-4S] cluster</name>
        <dbReference type="ChEBI" id="CHEBI:49883"/>
    </cofactor>
    <text evidence="1">Binds 3 [4Fe-4S] clusters.</text>
</comment>
<comment type="subunit">
    <text evidence="1">The complex is composed of six subunits: RnfA, RnfB, RnfC, RnfD, RnfE and RnfG.</text>
</comment>
<comment type="subcellular location">
    <subcellularLocation>
        <location evidence="1">Cell inner membrane</location>
    </subcellularLocation>
</comment>
<comment type="similarity">
    <text evidence="1">Belongs to the 4Fe4S bacterial-type ferredoxin family. RnfB subfamily.</text>
</comment>
<proteinExistence type="inferred from homology"/>